<dbReference type="EC" id="6.1.1.9" evidence="1"/>
<dbReference type="EMBL" id="CP000088">
    <property type="protein sequence ID" value="AAZ55969.1"/>
    <property type="molecule type" value="Genomic_DNA"/>
</dbReference>
<dbReference type="SMR" id="Q47NK0"/>
<dbReference type="STRING" id="269800.Tfu_1936"/>
<dbReference type="KEGG" id="tfu:Tfu_1936"/>
<dbReference type="eggNOG" id="COG0525">
    <property type="taxonomic scope" value="Bacteria"/>
</dbReference>
<dbReference type="HOGENOM" id="CLU_001493_0_2_11"/>
<dbReference type="GO" id="GO:0005829">
    <property type="term" value="C:cytosol"/>
    <property type="evidence" value="ECO:0007669"/>
    <property type="project" value="TreeGrafter"/>
</dbReference>
<dbReference type="GO" id="GO:0002161">
    <property type="term" value="F:aminoacyl-tRNA deacylase activity"/>
    <property type="evidence" value="ECO:0007669"/>
    <property type="project" value="InterPro"/>
</dbReference>
<dbReference type="GO" id="GO:0005524">
    <property type="term" value="F:ATP binding"/>
    <property type="evidence" value="ECO:0007669"/>
    <property type="project" value="UniProtKB-UniRule"/>
</dbReference>
<dbReference type="GO" id="GO:0004832">
    <property type="term" value="F:valine-tRNA ligase activity"/>
    <property type="evidence" value="ECO:0007669"/>
    <property type="project" value="UniProtKB-UniRule"/>
</dbReference>
<dbReference type="GO" id="GO:0006438">
    <property type="term" value="P:valyl-tRNA aminoacylation"/>
    <property type="evidence" value="ECO:0007669"/>
    <property type="project" value="UniProtKB-UniRule"/>
</dbReference>
<dbReference type="CDD" id="cd07962">
    <property type="entry name" value="Anticodon_Ia_Val"/>
    <property type="match status" value="1"/>
</dbReference>
<dbReference type="Gene3D" id="3.40.50.620">
    <property type="entry name" value="HUPs"/>
    <property type="match status" value="2"/>
</dbReference>
<dbReference type="Gene3D" id="1.10.730.10">
    <property type="entry name" value="Isoleucyl-tRNA Synthetase, Domain 1"/>
    <property type="match status" value="1"/>
</dbReference>
<dbReference type="HAMAP" id="MF_02005">
    <property type="entry name" value="Val_tRNA_synth_type2"/>
    <property type="match status" value="1"/>
</dbReference>
<dbReference type="InterPro" id="IPR001412">
    <property type="entry name" value="aa-tRNA-synth_I_CS"/>
</dbReference>
<dbReference type="InterPro" id="IPR002300">
    <property type="entry name" value="aa-tRNA-synth_Ia"/>
</dbReference>
<dbReference type="InterPro" id="IPR033705">
    <property type="entry name" value="Anticodon_Ia_Val"/>
</dbReference>
<dbReference type="InterPro" id="IPR013155">
    <property type="entry name" value="M/V/L/I-tRNA-synth_anticd-bd"/>
</dbReference>
<dbReference type="InterPro" id="IPR014729">
    <property type="entry name" value="Rossmann-like_a/b/a_fold"/>
</dbReference>
<dbReference type="InterPro" id="IPR009080">
    <property type="entry name" value="tRNAsynth_Ia_anticodon-bd"/>
</dbReference>
<dbReference type="InterPro" id="IPR009008">
    <property type="entry name" value="Val/Leu/Ile-tRNA-synth_edit"/>
</dbReference>
<dbReference type="InterPro" id="IPR022874">
    <property type="entry name" value="Valine-tRNA_ligase_type_2"/>
</dbReference>
<dbReference type="InterPro" id="IPR002303">
    <property type="entry name" value="Valyl-tRNA_ligase"/>
</dbReference>
<dbReference type="InterPro" id="IPR048044">
    <property type="entry name" value="Valyl-tRNA_ligase_actino"/>
</dbReference>
<dbReference type="NCBIfam" id="NF000540">
    <property type="entry name" value="alt_ValS"/>
    <property type="match status" value="1"/>
</dbReference>
<dbReference type="NCBIfam" id="NF009687">
    <property type="entry name" value="PRK13208.1"/>
    <property type="match status" value="1"/>
</dbReference>
<dbReference type="PANTHER" id="PTHR11946:SF93">
    <property type="entry name" value="VALINE--TRNA LIGASE, CHLOROPLASTIC_MITOCHONDRIAL 2"/>
    <property type="match status" value="1"/>
</dbReference>
<dbReference type="PANTHER" id="PTHR11946">
    <property type="entry name" value="VALYL-TRNA SYNTHETASES"/>
    <property type="match status" value="1"/>
</dbReference>
<dbReference type="Pfam" id="PF08264">
    <property type="entry name" value="Anticodon_1"/>
    <property type="match status" value="1"/>
</dbReference>
<dbReference type="Pfam" id="PF00133">
    <property type="entry name" value="tRNA-synt_1"/>
    <property type="match status" value="1"/>
</dbReference>
<dbReference type="PRINTS" id="PR00986">
    <property type="entry name" value="TRNASYNTHVAL"/>
</dbReference>
<dbReference type="SUPFAM" id="SSF47323">
    <property type="entry name" value="Anticodon-binding domain of a subclass of class I aminoacyl-tRNA synthetases"/>
    <property type="match status" value="1"/>
</dbReference>
<dbReference type="SUPFAM" id="SSF52374">
    <property type="entry name" value="Nucleotidylyl transferase"/>
    <property type="match status" value="1"/>
</dbReference>
<dbReference type="SUPFAM" id="SSF50677">
    <property type="entry name" value="ValRS/IleRS/LeuRS editing domain"/>
    <property type="match status" value="1"/>
</dbReference>
<dbReference type="PROSITE" id="PS00178">
    <property type="entry name" value="AA_TRNA_LIGASE_I"/>
    <property type="match status" value="1"/>
</dbReference>
<name>SYV_THEFY</name>
<gene>
    <name evidence="1" type="primary">valS</name>
    <name type="ordered locus">Tfu_1936</name>
</gene>
<protein>
    <recommendedName>
        <fullName evidence="1">Valine--tRNA ligase</fullName>
        <ecNumber evidence="1">6.1.1.9</ecNumber>
    </recommendedName>
    <alternativeName>
        <fullName evidence="1">Valyl-tRNA synthetase</fullName>
        <shortName evidence="1">ValRS</shortName>
    </alternativeName>
</protein>
<comment type="function">
    <text evidence="1">Catalyzes the attachment of valine to tRNA(Val). As ValRS can inadvertently accommodate and process structurally similar amino acids such as threonine, to avoid such errors, it has a 'posttransfer' editing activity that hydrolyzes mischarged Thr-tRNA(Val) in a tRNA-dependent manner.</text>
</comment>
<comment type="catalytic activity">
    <reaction evidence="1">
        <text>tRNA(Val) + L-valine + ATP = L-valyl-tRNA(Val) + AMP + diphosphate</text>
        <dbReference type="Rhea" id="RHEA:10704"/>
        <dbReference type="Rhea" id="RHEA-COMP:9672"/>
        <dbReference type="Rhea" id="RHEA-COMP:9708"/>
        <dbReference type="ChEBI" id="CHEBI:30616"/>
        <dbReference type="ChEBI" id="CHEBI:33019"/>
        <dbReference type="ChEBI" id="CHEBI:57762"/>
        <dbReference type="ChEBI" id="CHEBI:78442"/>
        <dbReference type="ChEBI" id="CHEBI:78537"/>
        <dbReference type="ChEBI" id="CHEBI:456215"/>
        <dbReference type="EC" id="6.1.1.9"/>
    </reaction>
</comment>
<comment type="subunit">
    <text evidence="1">Monomer.</text>
</comment>
<comment type="subcellular location">
    <subcellularLocation>
        <location evidence="1">Cytoplasm</location>
    </subcellularLocation>
</comment>
<comment type="domain">
    <text evidence="1">ValRS has two distinct active sites: one for aminoacylation and one for editing. The misactivated threonine is translocated from the active site to the editing site.</text>
</comment>
<comment type="similarity">
    <text evidence="1">Belongs to the class-I aminoacyl-tRNA synthetase family. ValS type 2 subfamily.</text>
</comment>
<proteinExistence type="inferred from homology"/>
<evidence type="ECO:0000255" key="1">
    <source>
        <dbReference type="HAMAP-Rule" id="MF_02005"/>
    </source>
</evidence>
<evidence type="ECO:0000256" key="2">
    <source>
        <dbReference type="SAM" id="MobiDB-lite"/>
    </source>
</evidence>
<accession>Q47NK0</accession>
<feature type="chain" id="PRO_0000224616" description="Valine--tRNA ligase">
    <location>
        <begin position="1"/>
        <end position="881"/>
    </location>
</feature>
<feature type="region of interest" description="Disordered" evidence="2">
    <location>
        <begin position="493"/>
        <end position="526"/>
    </location>
</feature>
<feature type="short sequence motif" description="'HIGH' region">
    <location>
        <begin position="76"/>
        <end position="86"/>
    </location>
</feature>
<feature type="short sequence motif" description="'KMSKS' region">
    <location>
        <begin position="608"/>
        <end position="612"/>
    </location>
</feature>
<feature type="binding site" evidence="1">
    <location>
        <position position="611"/>
    </location>
    <ligand>
        <name>ATP</name>
        <dbReference type="ChEBI" id="CHEBI:30616"/>
    </ligand>
</feature>
<keyword id="KW-0030">Aminoacyl-tRNA synthetase</keyword>
<keyword id="KW-0067">ATP-binding</keyword>
<keyword id="KW-0963">Cytoplasm</keyword>
<keyword id="KW-0436">Ligase</keyword>
<keyword id="KW-0547">Nucleotide-binding</keyword>
<keyword id="KW-0648">Protein biosynthesis</keyword>
<organism>
    <name type="scientific">Thermobifida fusca (strain YX)</name>
    <dbReference type="NCBI Taxonomy" id="269800"/>
    <lineage>
        <taxon>Bacteria</taxon>
        <taxon>Bacillati</taxon>
        <taxon>Actinomycetota</taxon>
        <taxon>Actinomycetes</taxon>
        <taxon>Streptosporangiales</taxon>
        <taxon>Nocardiopsidaceae</taxon>
        <taxon>Thermobifida</taxon>
    </lineage>
</organism>
<reference key="1">
    <citation type="journal article" date="2007" name="J. Bacteriol.">
        <title>Genome sequence and analysis of the soil cellulolytic actinomycete Thermobifida fusca YX.</title>
        <authorList>
            <person name="Lykidis A."/>
            <person name="Mavromatis K."/>
            <person name="Ivanova N."/>
            <person name="Anderson I."/>
            <person name="Land M."/>
            <person name="DiBartolo G."/>
            <person name="Martinez M."/>
            <person name="Lapidus A."/>
            <person name="Lucas S."/>
            <person name="Copeland A."/>
            <person name="Richardson P."/>
            <person name="Wilson D.B."/>
            <person name="Kyrpides N."/>
        </authorList>
    </citation>
    <scope>NUCLEOTIDE SEQUENCE [LARGE SCALE GENOMIC DNA]</scope>
    <source>
        <strain>YX</strain>
    </source>
</reference>
<sequence length="881" mass="99445">MGCRPRGPRGQAERAGSRCQYHWPMTNRSRSFNVPDKPSLDGIEAKWVDVWDESGVYHFDRSKSREEIFAIDTPPPTVSGSLHIGHVFSYTHTDTVARFQRMNGKSVFYPMGWDDNGLPTERRVQNYYGVRCDPSIPYDPDFTPPEKPDPKNQVPISRRNFIELCERLTVEDEKVFESIWRRLGLSVDWRYTYATIDDKSRAVAQRAFLRNLARGEAYMAEAPTLWDVTFRTAVAQAELEDRERPGAYHKVAFHRDGGDPIIIATTRPELLPACVALVAHPDDERYQSLFGTTVRSPLFGVEVPVVAHRLADPEKGTGIAMICTFGDVTDVTWWRELKLPTRAIIGWDGRIVADPPEGLDSEEGRAAYAKLAGATVHTARQRIVEMLRESGDLIGEPEKITHPVKFFEKGDKPLEIVTTRQWYIRNGGRDPELREALLKRGQELDWYPEHMRTRFEHWVGGLNGDWLISRQRFFGVPFPVWYPLDDKGNPIYDSPILPDESQLPVDPSSQAPEGYTEDQRGKPGGFIGDPDVMDTWATSSLTPQIAGGWESDPDLFERVFPMDLRPQGQDIIRTWLFSTVVRSHFEHDCLPWKKAAISGWILDPDRKKMSKSKGNVVTPLSMLEKYSSDAVRYWAASGRLGTDTALDEKQMKIGRRLAIKILNASKFALSVAGEDTVADPAAVTEPLDRSMLAVLAEVVQDATAAFHEYDHTRALERTERFFWNLCDDYLELVKARAYDPESREGASARAALLIALSVLHRLFAPFLPFVTEEVWSWWQDGSVHVAKWPSVEEFRAAAEAGDPAVLAATSEVLHTVRKAKSEAKLSMRAEVERVTVHGKQAEQARLCRDDLAAAGRVTTLVFETTDDAELRVDVELAPAEK</sequence>